<evidence type="ECO:0000250" key="1"/>
<evidence type="ECO:0000255" key="2">
    <source>
        <dbReference type="PROSITE-ProRule" id="PRU00659"/>
    </source>
</evidence>
<evidence type="ECO:0000305" key="3"/>
<protein>
    <recommendedName>
        <fullName>Tubulin-specific chaperone C</fullName>
    </recommendedName>
    <alternativeName>
        <fullName>Tubulin-folding cofactor C</fullName>
        <shortName>CFC</shortName>
    </alternativeName>
</protein>
<organism>
    <name type="scientific">Schizosaccharomyces pombe (strain 972 / ATCC 24843)</name>
    <name type="common">Fission yeast</name>
    <dbReference type="NCBI Taxonomy" id="284812"/>
    <lineage>
        <taxon>Eukaryota</taxon>
        <taxon>Fungi</taxon>
        <taxon>Dikarya</taxon>
        <taxon>Ascomycota</taxon>
        <taxon>Taphrinomycotina</taxon>
        <taxon>Schizosaccharomycetes</taxon>
        <taxon>Schizosaccharomycetales</taxon>
        <taxon>Schizosaccharomycetaceae</taxon>
        <taxon>Schizosaccharomyces</taxon>
    </lineage>
</organism>
<keyword id="KW-0143">Chaperone</keyword>
<keyword id="KW-0963">Cytoplasm</keyword>
<keyword id="KW-0206">Cytoskeleton</keyword>
<keyword id="KW-0493">Microtubule</keyword>
<keyword id="KW-1185">Reference proteome</keyword>
<sequence length="259" mass="30075">MSEKFVELRKEFLTKLYKSTPSEQTSRSEKETWLEEKSKYLGEMTRELNEVQDQIAPYDRRVCMEQLVDLTRRLQQIRHDILPRQPFRFQRALHVKSSQKPVKNITVNAEAPEVYFENDTLYLANLKNQNIGDNVIPYPNNKAVKVSAKSLRSCNISISNCSSVNLHNATKCNFTFPTIQGSIHLSDINDSTICVSCHQFRLHHSTNLRVHLRCKTSPVIEESKEISFSYKDEHPILDFTWARSDPSPHFRITSDLFDA</sequence>
<feature type="chain" id="PRO_0000337255" description="Tubulin-specific chaperone C">
    <location>
        <begin position="1"/>
        <end position="259"/>
    </location>
</feature>
<feature type="domain" description="C-CAP/cofactor C-like" evidence="2">
    <location>
        <begin position="112"/>
        <end position="241"/>
    </location>
</feature>
<name>TBCC_SCHPO</name>
<proteinExistence type="inferred from homology"/>
<accession>Q9P3T8</accession>
<comment type="function">
    <text evidence="1">Tubulin-folding protein; involved in the final step of the tubulin folding pathway.</text>
</comment>
<comment type="subcellular location">
    <subcellularLocation>
        <location evidence="3">Cytoplasm</location>
        <location evidence="3">Cytoskeleton</location>
    </subcellularLocation>
</comment>
<comment type="similarity">
    <text evidence="3">Belongs to the TBCC family.</text>
</comment>
<reference key="1">
    <citation type="journal article" date="2002" name="Nature">
        <title>The genome sequence of Schizosaccharomyces pombe.</title>
        <authorList>
            <person name="Wood V."/>
            <person name="Gwilliam R."/>
            <person name="Rajandream M.A."/>
            <person name="Lyne M.H."/>
            <person name="Lyne R."/>
            <person name="Stewart A."/>
            <person name="Sgouros J.G."/>
            <person name="Peat N."/>
            <person name="Hayles J."/>
            <person name="Baker S.G."/>
            <person name="Basham D."/>
            <person name="Bowman S."/>
            <person name="Brooks K."/>
            <person name="Brown D."/>
            <person name="Brown S."/>
            <person name="Chillingworth T."/>
            <person name="Churcher C.M."/>
            <person name="Collins M."/>
            <person name="Connor R."/>
            <person name="Cronin A."/>
            <person name="Davis P."/>
            <person name="Feltwell T."/>
            <person name="Fraser A."/>
            <person name="Gentles S."/>
            <person name="Goble A."/>
            <person name="Hamlin N."/>
            <person name="Harris D.E."/>
            <person name="Hidalgo J."/>
            <person name="Hodgson G."/>
            <person name="Holroyd S."/>
            <person name="Hornsby T."/>
            <person name="Howarth S."/>
            <person name="Huckle E.J."/>
            <person name="Hunt S."/>
            <person name="Jagels K."/>
            <person name="James K.D."/>
            <person name="Jones L."/>
            <person name="Jones M."/>
            <person name="Leather S."/>
            <person name="McDonald S."/>
            <person name="McLean J."/>
            <person name="Mooney P."/>
            <person name="Moule S."/>
            <person name="Mungall K.L."/>
            <person name="Murphy L.D."/>
            <person name="Niblett D."/>
            <person name="Odell C."/>
            <person name="Oliver K."/>
            <person name="O'Neil S."/>
            <person name="Pearson D."/>
            <person name="Quail M.A."/>
            <person name="Rabbinowitsch E."/>
            <person name="Rutherford K.M."/>
            <person name="Rutter S."/>
            <person name="Saunders D."/>
            <person name="Seeger K."/>
            <person name="Sharp S."/>
            <person name="Skelton J."/>
            <person name="Simmonds M.N."/>
            <person name="Squares R."/>
            <person name="Squares S."/>
            <person name="Stevens K."/>
            <person name="Taylor K."/>
            <person name="Taylor R.G."/>
            <person name="Tivey A."/>
            <person name="Walsh S.V."/>
            <person name="Warren T."/>
            <person name="Whitehead S."/>
            <person name="Woodward J.R."/>
            <person name="Volckaert G."/>
            <person name="Aert R."/>
            <person name="Robben J."/>
            <person name="Grymonprez B."/>
            <person name="Weltjens I."/>
            <person name="Vanstreels E."/>
            <person name="Rieger M."/>
            <person name="Schaefer M."/>
            <person name="Mueller-Auer S."/>
            <person name="Gabel C."/>
            <person name="Fuchs M."/>
            <person name="Duesterhoeft A."/>
            <person name="Fritzc C."/>
            <person name="Holzer E."/>
            <person name="Moestl D."/>
            <person name="Hilbert H."/>
            <person name="Borzym K."/>
            <person name="Langer I."/>
            <person name="Beck A."/>
            <person name="Lehrach H."/>
            <person name="Reinhardt R."/>
            <person name="Pohl T.M."/>
            <person name="Eger P."/>
            <person name="Zimmermann W."/>
            <person name="Wedler H."/>
            <person name="Wambutt R."/>
            <person name="Purnelle B."/>
            <person name="Goffeau A."/>
            <person name="Cadieu E."/>
            <person name="Dreano S."/>
            <person name="Gloux S."/>
            <person name="Lelaure V."/>
            <person name="Mottier S."/>
            <person name="Galibert F."/>
            <person name="Aves S.J."/>
            <person name="Xiang Z."/>
            <person name="Hunt C."/>
            <person name="Moore K."/>
            <person name="Hurst S.M."/>
            <person name="Lucas M."/>
            <person name="Rochet M."/>
            <person name="Gaillardin C."/>
            <person name="Tallada V.A."/>
            <person name="Garzon A."/>
            <person name="Thode G."/>
            <person name="Daga R.R."/>
            <person name="Cruzado L."/>
            <person name="Jimenez J."/>
            <person name="Sanchez M."/>
            <person name="del Rey F."/>
            <person name="Benito J."/>
            <person name="Dominguez A."/>
            <person name="Revuelta J.L."/>
            <person name="Moreno S."/>
            <person name="Armstrong J."/>
            <person name="Forsburg S.L."/>
            <person name="Cerutti L."/>
            <person name="Lowe T."/>
            <person name="McCombie W.R."/>
            <person name="Paulsen I."/>
            <person name="Potashkin J."/>
            <person name="Shpakovski G.V."/>
            <person name="Ussery D."/>
            <person name="Barrell B.G."/>
            <person name="Nurse P."/>
        </authorList>
    </citation>
    <scope>NUCLEOTIDE SEQUENCE [LARGE SCALE GENOMIC DNA]</scope>
    <source>
        <strain>972 / ATCC 24843</strain>
    </source>
</reference>
<gene>
    <name type="primary">cin2</name>
    <name type="ORF">SPAC328.08c</name>
</gene>
<dbReference type="EMBL" id="CU329670">
    <property type="protein sequence ID" value="CAB96003.1"/>
    <property type="molecule type" value="Genomic_DNA"/>
</dbReference>
<dbReference type="SMR" id="Q9P3T8"/>
<dbReference type="BioGRID" id="279617">
    <property type="interactions" value="6"/>
</dbReference>
<dbReference type="FunCoup" id="Q9P3T8">
    <property type="interactions" value="421"/>
</dbReference>
<dbReference type="STRING" id="284812.Q9P3T8"/>
<dbReference type="PaxDb" id="4896-SPAC328.08c.1"/>
<dbReference type="EnsemblFungi" id="SPAC328.08c.1">
    <property type="protein sequence ID" value="SPAC328.08c.1:pep"/>
    <property type="gene ID" value="SPAC328.08c"/>
</dbReference>
<dbReference type="KEGG" id="spo:2543188"/>
<dbReference type="PomBase" id="SPAC328.08c"/>
<dbReference type="VEuPathDB" id="FungiDB:SPAC328.08c"/>
<dbReference type="eggNOG" id="KOG2512">
    <property type="taxonomic scope" value="Eukaryota"/>
</dbReference>
<dbReference type="HOGENOM" id="CLU_1094821_0_0_1"/>
<dbReference type="InParanoid" id="Q9P3T8"/>
<dbReference type="OMA" id="HQFRLHE"/>
<dbReference type="PhylomeDB" id="Q9P3T8"/>
<dbReference type="PRO" id="PR:Q9P3T8"/>
<dbReference type="Proteomes" id="UP000002485">
    <property type="component" value="Chromosome I"/>
</dbReference>
<dbReference type="GO" id="GO:0005737">
    <property type="term" value="C:cytoplasm"/>
    <property type="evidence" value="ECO:0007005"/>
    <property type="project" value="PomBase"/>
</dbReference>
<dbReference type="GO" id="GO:0005874">
    <property type="term" value="C:microtubule"/>
    <property type="evidence" value="ECO:0007669"/>
    <property type="project" value="UniProtKB-KW"/>
</dbReference>
<dbReference type="GO" id="GO:1990727">
    <property type="term" value="C:tubulin folding cofactor complex"/>
    <property type="evidence" value="ECO:0000303"/>
    <property type="project" value="PomBase"/>
</dbReference>
<dbReference type="GO" id="GO:0005096">
    <property type="term" value="F:GTPase activator activity"/>
    <property type="evidence" value="ECO:0000266"/>
    <property type="project" value="PomBase"/>
</dbReference>
<dbReference type="GO" id="GO:0007023">
    <property type="term" value="P:post-chaperonin tubulin folding pathway"/>
    <property type="evidence" value="ECO:0007669"/>
    <property type="project" value="InterPro"/>
</dbReference>
<dbReference type="GO" id="GO:0006457">
    <property type="term" value="P:protein folding"/>
    <property type="evidence" value="ECO:0000318"/>
    <property type="project" value="GO_Central"/>
</dbReference>
<dbReference type="GO" id="GO:0007021">
    <property type="term" value="P:tubulin complex assembly"/>
    <property type="evidence" value="ECO:0000318"/>
    <property type="project" value="GO_Central"/>
</dbReference>
<dbReference type="Gene3D" id="2.160.20.70">
    <property type="match status" value="1"/>
</dbReference>
<dbReference type="Gene3D" id="1.20.58.1250">
    <property type="entry name" value="Tubulin Binding Cofactor C, N-terminal domain"/>
    <property type="match status" value="1"/>
</dbReference>
<dbReference type="InterPro" id="IPR017901">
    <property type="entry name" value="C-CAP_CF_C-like"/>
</dbReference>
<dbReference type="InterPro" id="IPR016098">
    <property type="entry name" value="CAP/MinC_C"/>
</dbReference>
<dbReference type="InterPro" id="IPR006599">
    <property type="entry name" value="CARP_motif"/>
</dbReference>
<dbReference type="InterPro" id="IPR027684">
    <property type="entry name" value="TBCC"/>
</dbReference>
<dbReference type="InterPro" id="IPR038397">
    <property type="entry name" value="TBCC_N_sf"/>
</dbReference>
<dbReference type="InterPro" id="IPR012945">
    <property type="entry name" value="Tubulin-bd_cofactor_C_dom"/>
</dbReference>
<dbReference type="PANTHER" id="PTHR15139">
    <property type="entry name" value="TUBULIN FOLDING COFACTOR C"/>
    <property type="match status" value="1"/>
</dbReference>
<dbReference type="PANTHER" id="PTHR15139:SF0">
    <property type="entry name" value="TUBULIN-SPECIFIC CHAPERONE C"/>
    <property type="match status" value="1"/>
</dbReference>
<dbReference type="Pfam" id="PF07986">
    <property type="entry name" value="TBCC"/>
    <property type="match status" value="1"/>
</dbReference>
<dbReference type="SMART" id="SM00673">
    <property type="entry name" value="CARP"/>
    <property type="match status" value="2"/>
</dbReference>
<dbReference type="PROSITE" id="PS51329">
    <property type="entry name" value="C_CAP_COFACTOR_C"/>
    <property type="match status" value="1"/>
</dbReference>